<dbReference type="EMBL" id="CP000976">
    <property type="protein sequence ID" value="ACH93430.1"/>
    <property type="molecule type" value="Genomic_DNA"/>
</dbReference>
<dbReference type="RefSeq" id="WP_012538240.1">
    <property type="nucleotide sequence ID" value="NC_011229.1"/>
</dbReference>
<dbReference type="SMR" id="B5RM44"/>
<dbReference type="STRING" id="412419.BDU_489"/>
<dbReference type="KEGG" id="bdu:BDU_489"/>
<dbReference type="eggNOG" id="COG0255">
    <property type="taxonomic scope" value="Bacteria"/>
</dbReference>
<dbReference type="HOGENOM" id="CLU_158491_5_0_12"/>
<dbReference type="OrthoDB" id="371096at2"/>
<dbReference type="Proteomes" id="UP000000611">
    <property type="component" value="Chromosome"/>
</dbReference>
<dbReference type="GO" id="GO:1990904">
    <property type="term" value="C:ribonucleoprotein complex"/>
    <property type="evidence" value="ECO:0007669"/>
    <property type="project" value="UniProtKB-KW"/>
</dbReference>
<dbReference type="GO" id="GO:0005840">
    <property type="term" value="C:ribosome"/>
    <property type="evidence" value="ECO:0007669"/>
    <property type="project" value="UniProtKB-KW"/>
</dbReference>
<dbReference type="GO" id="GO:0003735">
    <property type="term" value="F:structural constituent of ribosome"/>
    <property type="evidence" value="ECO:0007669"/>
    <property type="project" value="InterPro"/>
</dbReference>
<dbReference type="GO" id="GO:0006412">
    <property type="term" value="P:translation"/>
    <property type="evidence" value="ECO:0007669"/>
    <property type="project" value="UniProtKB-UniRule"/>
</dbReference>
<dbReference type="CDD" id="cd00427">
    <property type="entry name" value="Ribosomal_L29_HIP"/>
    <property type="match status" value="1"/>
</dbReference>
<dbReference type="Gene3D" id="1.10.287.310">
    <property type="match status" value="1"/>
</dbReference>
<dbReference type="HAMAP" id="MF_00374">
    <property type="entry name" value="Ribosomal_uL29"/>
    <property type="match status" value="1"/>
</dbReference>
<dbReference type="InterPro" id="IPR001854">
    <property type="entry name" value="Ribosomal_uL29"/>
</dbReference>
<dbReference type="InterPro" id="IPR036049">
    <property type="entry name" value="Ribosomal_uL29_sf"/>
</dbReference>
<dbReference type="NCBIfam" id="TIGR00012">
    <property type="entry name" value="L29"/>
    <property type="match status" value="1"/>
</dbReference>
<dbReference type="Pfam" id="PF00831">
    <property type="entry name" value="Ribosomal_L29"/>
    <property type="match status" value="1"/>
</dbReference>
<dbReference type="SUPFAM" id="SSF46561">
    <property type="entry name" value="Ribosomal protein L29 (L29p)"/>
    <property type="match status" value="1"/>
</dbReference>
<comment type="similarity">
    <text evidence="1">Belongs to the universal ribosomal protein uL29 family.</text>
</comment>
<evidence type="ECO:0000255" key="1">
    <source>
        <dbReference type="HAMAP-Rule" id="MF_00374"/>
    </source>
</evidence>
<evidence type="ECO:0000305" key="2"/>
<name>RL29_BORDL</name>
<sequence length="66" mass="7905">MLKNLKDLTLEDMKAKRLTLKKEYMDLRFKTVVGHVENPLKKRELRRDIARLNTIIHEYAIGIRKV</sequence>
<gene>
    <name evidence="1" type="primary">rpmC</name>
    <name type="ordered locus">BDU_489</name>
</gene>
<feature type="chain" id="PRO_1000121734" description="Large ribosomal subunit protein uL29">
    <location>
        <begin position="1"/>
        <end position="66"/>
    </location>
</feature>
<organism>
    <name type="scientific">Borrelia duttonii (strain Ly)</name>
    <dbReference type="NCBI Taxonomy" id="412419"/>
    <lineage>
        <taxon>Bacteria</taxon>
        <taxon>Pseudomonadati</taxon>
        <taxon>Spirochaetota</taxon>
        <taxon>Spirochaetia</taxon>
        <taxon>Spirochaetales</taxon>
        <taxon>Borreliaceae</taxon>
        <taxon>Borrelia</taxon>
    </lineage>
</organism>
<proteinExistence type="inferred from homology"/>
<reference key="1">
    <citation type="journal article" date="2008" name="PLoS Genet.">
        <title>The genome of Borrelia recurrentis, the agent of deadly louse-borne relapsing fever, is a degraded subset of tick-borne Borrelia duttonii.</title>
        <authorList>
            <person name="Lescot M."/>
            <person name="Audic S."/>
            <person name="Robert C."/>
            <person name="Nguyen T.T."/>
            <person name="Blanc G."/>
            <person name="Cutler S.J."/>
            <person name="Wincker P."/>
            <person name="Couloux A."/>
            <person name="Claverie J.-M."/>
            <person name="Raoult D."/>
            <person name="Drancourt M."/>
        </authorList>
    </citation>
    <scope>NUCLEOTIDE SEQUENCE [LARGE SCALE GENOMIC DNA]</scope>
    <source>
        <strain>Ly</strain>
    </source>
</reference>
<accession>B5RM44</accession>
<keyword id="KW-0687">Ribonucleoprotein</keyword>
<keyword id="KW-0689">Ribosomal protein</keyword>
<protein>
    <recommendedName>
        <fullName evidence="1">Large ribosomal subunit protein uL29</fullName>
    </recommendedName>
    <alternativeName>
        <fullName evidence="2">50S ribosomal protein L29</fullName>
    </alternativeName>
</protein>